<evidence type="ECO:0000255" key="1">
    <source>
        <dbReference type="HAMAP-Rule" id="MF_01858"/>
    </source>
</evidence>
<gene>
    <name evidence="1" type="primary">rlmL</name>
    <name type="ordered locus">UTI89_C1013</name>
</gene>
<sequence length="702" mass="78812">MNSLFASTARGLEELLKTELENLGAVECQVVQGGVHFKGDTRLVYQSLMWSRLASRIMLPLGECKVYSDLDLYLGVQAINWTEMFNPGATFAVHFSGLNDTIRNSQYGAMKVKDAIVDAFTRKNLPRPNVDRDAPDIRVNVWLHKETASIALDLSGDGLHLRGYRDRAGMAPIKETLAAAIVMRSGWQPGTPLLDPMCGSGTLLIEAAMLATDRAPGLHRGRWGFSGWTQHDEAIWQEVKAEAQTRARKGLAEYSSHFFGSDSDARVIQRARTNARLAGIGELITFEVNDVAQLANPLPKGPYGTVLSNPPYGERLDSEPALIALHSLLGRIMKNQFGGWNLSLFSASPDLLSCLQLRADKQYKAKNGPLDCVQKNYHVAESTPDSKPVMAAEDYANRLRKNLKKFEKWARQEGIECYRLYDADLPEYNVAVDRYADWVVVQEYAPPKTIDAHKARQRLFDIIAATISVLGIAPNKLVLKTRERQKGKNQYQKLGEKGEFLEVTEYNAHLWVNLTDYLDTGLFLDHRIARRMLGQMSKGKDFLNLFSYTGSATVHAGLGGARSTTTVDMSRTYLEWAERNLRLNGLTGRAHRLIQADCLAWLREANEQFDLIFIDPPTFSNSKRMEDAFDVQRDHLALMKDLKRLLRAGGTIMFSNNKRGFRMDLDGLAKLGLKAQEITQKTLSQDFARNRQIHNCWLITAA</sequence>
<accession>Q1RDR6</accession>
<protein>
    <recommendedName>
        <fullName evidence="1">Ribosomal RNA large subunit methyltransferase K/L</fullName>
    </recommendedName>
    <domain>
        <recommendedName>
            <fullName evidence="1">23S rRNA m2G2445 methyltransferase</fullName>
            <ecNumber evidence="1">2.1.1.173</ecNumber>
        </recommendedName>
        <alternativeName>
            <fullName evidence="1">rRNA (guanine-N(2)-)-methyltransferase RlmL</fullName>
        </alternativeName>
    </domain>
    <domain>
        <recommendedName>
            <fullName evidence="1">23S rRNA m7G2069 methyltransferase</fullName>
            <ecNumber evidence="1">2.1.1.264</ecNumber>
        </recommendedName>
        <alternativeName>
            <fullName evidence="1">rRNA (guanine-N(7)-)-methyltransferase RlmK</fullName>
        </alternativeName>
    </domain>
</protein>
<feature type="chain" id="PRO_0000366742" description="Ribosomal RNA large subunit methyltransferase K/L">
    <location>
        <begin position="1"/>
        <end position="702"/>
    </location>
</feature>
<feature type="domain" description="THUMP" evidence="1">
    <location>
        <begin position="43"/>
        <end position="154"/>
    </location>
</feature>
<reference key="1">
    <citation type="journal article" date="2006" name="Proc. Natl. Acad. Sci. U.S.A.">
        <title>Identification of genes subject to positive selection in uropathogenic strains of Escherichia coli: a comparative genomics approach.</title>
        <authorList>
            <person name="Chen S.L."/>
            <person name="Hung C.-S."/>
            <person name="Xu J."/>
            <person name="Reigstad C.S."/>
            <person name="Magrini V."/>
            <person name="Sabo A."/>
            <person name="Blasiar D."/>
            <person name="Bieri T."/>
            <person name="Meyer R.R."/>
            <person name="Ozersky P."/>
            <person name="Armstrong J.R."/>
            <person name="Fulton R.S."/>
            <person name="Latreille J.P."/>
            <person name="Spieth J."/>
            <person name="Hooton T.M."/>
            <person name="Mardis E.R."/>
            <person name="Hultgren S.J."/>
            <person name="Gordon J.I."/>
        </authorList>
    </citation>
    <scope>NUCLEOTIDE SEQUENCE [LARGE SCALE GENOMIC DNA]</scope>
    <source>
        <strain>UTI89 / UPEC</strain>
    </source>
</reference>
<name>RLMKL_ECOUT</name>
<proteinExistence type="inferred from homology"/>
<comment type="function">
    <text evidence="1">Specifically methylates the guanine in position 2445 (m2G2445) and the guanine in position 2069 (m7G2069) of 23S rRNA.</text>
</comment>
<comment type="catalytic activity">
    <reaction evidence="1">
        <text>guanosine(2445) in 23S rRNA + S-adenosyl-L-methionine = N(2)-methylguanosine(2445) in 23S rRNA + S-adenosyl-L-homocysteine + H(+)</text>
        <dbReference type="Rhea" id="RHEA:42740"/>
        <dbReference type="Rhea" id="RHEA-COMP:10215"/>
        <dbReference type="Rhea" id="RHEA-COMP:10216"/>
        <dbReference type="ChEBI" id="CHEBI:15378"/>
        <dbReference type="ChEBI" id="CHEBI:57856"/>
        <dbReference type="ChEBI" id="CHEBI:59789"/>
        <dbReference type="ChEBI" id="CHEBI:74269"/>
        <dbReference type="ChEBI" id="CHEBI:74481"/>
        <dbReference type="EC" id="2.1.1.173"/>
    </reaction>
</comment>
<comment type="catalytic activity">
    <reaction evidence="1">
        <text>guanosine(2069) in 23S rRNA + S-adenosyl-L-methionine = N(2)-methylguanosine(2069) in 23S rRNA + S-adenosyl-L-homocysteine + H(+)</text>
        <dbReference type="Rhea" id="RHEA:43772"/>
        <dbReference type="Rhea" id="RHEA-COMP:10688"/>
        <dbReference type="Rhea" id="RHEA-COMP:10689"/>
        <dbReference type="ChEBI" id="CHEBI:15378"/>
        <dbReference type="ChEBI" id="CHEBI:57856"/>
        <dbReference type="ChEBI" id="CHEBI:59789"/>
        <dbReference type="ChEBI" id="CHEBI:74269"/>
        <dbReference type="ChEBI" id="CHEBI:74481"/>
        <dbReference type="EC" id="2.1.1.264"/>
    </reaction>
</comment>
<comment type="subcellular location">
    <subcellularLocation>
        <location evidence="1">Cytoplasm</location>
    </subcellularLocation>
</comment>
<comment type="similarity">
    <text evidence="1">Belongs to the methyltransferase superfamily. RlmKL family.</text>
</comment>
<keyword id="KW-0963">Cytoplasm</keyword>
<keyword id="KW-0489">Methyltransferase</keyword>
<keyword id="KW-0694">RNA-binding</keyword>
<keyword id="KW-0698">rRNA processing</keyword>
<keyword id="KW-0949">S-adenosyl-L-methionine</keyword>
<keyword id="KW-0808">Transferase</keyword>
<organism>
    <name type="scientific">Escherichia coli (strain UTI89 / UPEC)</name>
    <dbReference type="NCBI Taxonomy" id="364106"/>
    <lineage>
        <taxon>Bacteria</taxon>
        <taxon>Pseudomonadati</taxon>
        <taxon>Pseudomonadota</taxon>
        <taxon>Gammaproteobacteria</taxon>
        <taxon>Enterobacterales</taxon>
        <taxon>Enterobacteriaceae</taxon>
        <taxon>Escherichia</taxon>
    </lineage>
</organism>
<dbReference type="EC" id="2.1.1.173" evidence="1"/>
<dbReference type="EC" id="2.1.1.264" evidence="1"/>
<dbReference type="EMBL" id="CP000243">
    <property type="protein sequence ID" value="ABE06498.1"/>
    <property type="molecule type" value="Genomic_DNA"/>
</dbReference>
<dbReference type="SMR" id="Q1RDR6"/>
<dbReference type="KEGG" id="eci:UTI89_C1013"/>
<dbReference type="HOGENOM" id="CLU_014042_2_0_6"/>
<dbReference type="Proteomes" id="UP000001952">
    <property type="component" value="Chromosome"/>
</dbReference>
<dbReference type="GO" id="GO:0005737">
    <property type="term" value="C:cytoplasm"/>
    <property type="evidence" value="ECO:0007669"/>
    <property type="project" value="UniProtKB-SubCell"/>
</dbReference>
<dbReference type="GO" id="GO:0052915">
    <property type="term" value="F:23S rRNA (guanine(2445)-N(2))-methyltransferase activity"/>
    <property type="evidence" value="ECO:0007669"/>
    <property type="project" value="UniProtKB-UniRule"/>
</dbReference>
<dbReference type="GO" id="GO:0003723">
    <property type="term" value="F:RNA binding"/>
    <property type="evidence" value="ECO:0007669"/>
    <property type="project" value="UniProtKB-KW"/>
</dbReference>
<dbReference type="GO" id="GO:0070043">
    <property type="term" value="F:rRNA (guanine-N7-)-methyltransferase activity"/>
    <property type="evidence" value="ECO:0007669"/>
    <property type="project" value="UniProtKB-UniRule"/>
</dbReference>
<dbReference type="CDD" id="cd02440">
    <property type="entry name" value="AdoMet_MTases"/>
    <property type="match status" value="1"/>
</dbReference>
<dbReference type="CDD" id="cd11715">
    <property type="entry name" value="THUMP_AdoMetMT"/>
    <property type="match status" value="1"/>
</dbReference>
<dbReference type="FunFam" id="3.30.750.80:FF:000001">
    <property type="entry name" value="Ribosomal RNA large subunit methyltransferase K/L"/>
    <property type="match status" value="1"/>
</dbReference>
<dbReference type="FunFam" id="3.40.50.150:FF:000039">
    <property type="entry name" value="Ribosomal RNA large subunit methyltransferase K/L"/>
    <property type="match status" value="1"/>
</dbReference>
<dbReference type="Gene3D" id="3.30.2130.30">
    <property type="match status" value="1"/>
</dbReference>
<dbReference type="Gene3D" id="3.30.750.80">
    <property type="entry name" value="RNA methyltransferase domain (HRMD) like"/>
    <property type="match status" value="1"/>
</dbReference>
<dbReference type="Gene3D" id="3.40.50.150">
    <property type="entry name" value="Vaccinia Virus protein VP39"/>
    <property type="match status" value="2"/>
</dbReference>
<dbReference type="HAMAP" id="MF_01858">
    <property type="entry name" value="23SrRNA_methyltr_KL"/>
    <property type="match status" value="1"/>
</dbReference>
<dbReference type="InterPro" id="IPR017244">
    <property type="entry name" value="23SrRNA_methyltr_KL"/>
</dbReference>
<dbReference type="InterPro" id="IPR002052">
    <property type="entry name" value="DNA_methylase_N6_adenine_CS"/>
</dbReference>
<dbReference type="InterPro" id="IPR000241">
    <property type="entry name" value="RlmKL-like_Mtase"/>
</dbReference>
<dbReference type="InterPro" id="IPR053943">
    <property type="entry name" value="RlmKL-like_Mtase_CS"/>
</dbReference>
<dbReference type="InterPro" id="IPR054170">
    <property type="entry name" value="RlmL_1st"/>
</dbReference>
<dbReference type="InterPro" id="IPR019614">
    <property type="entry name" value="SAM-dep_methyl-trfase"/>
</dbReference>
<dbReference type="InterPro" id="IPR029063">
    <property type="entry name" value="SAM-dependent_MTases_sf"/>
</dbReference>
<dbReference type="InterPro" id="IPR004114">
    <property type="entry name" value="THUMP_dom"/>
</dbReference>
<dbReference type="NCBIfam" id="NF008748">
    <property type="entry name" value="PRK11783.1"/>
    <property type="match status" value="1"/>
</dbReference>
<dbReference type="PANTHER" id="PTHR47313">
    <property type="entry name" value="RIBOSOMAL RNA LARGE SUBUNIT METHYLTRANSFERASE K/L"/>
    <property type="match status" value="1"/>
</dbReference>
<dbReference type="PANTHER" id="PTHR47313:SF1">
    <property type="entry name" value="RIBOSOMAL RNA LARGE SUBUNIT METHYLTRANSFERASE K_L"/>
    <property type="match status" value="1"/>
</dbReference>
<dbReference type="Pfam" id="PF10672">
    <property type="entry name" value="Methyltrans_SAM"/>
    <property type="match status" value="1"/>
</dbReference>
<dbReference type="Pfam" id="PF22020">
    <property type="entry name" value="RlmL_1st"/>
    <property type="match status" value="1"/>
</dbReference>
<dbReference type="Pfam" id="PF02926">
    <property type="entry name" value="THUMP"/>
    <property type="match status" value="1"/>
</dbReference>
<dbReference type="Pfam" id="PF01170">
    <property type="entry name" value="UPF0020"/>
    <property type="match status" value="1"/>
</dbReference>
<dbReference type="PIRSF" id="PIRSF037618">
    <property type="entry name" value="RNA_Mtase_bacteria_prd"/>
    <property type="match status" value="1"/>
</dbReference>
<dbReference type="PRINTS" id="PR00507">
    <property type="entry name" value="N12N6MTFRASE"/>
</dbReference>
<dbReference type="SMART" id="SM00981">
    <property type="entry name" value="THUMP"/>
    <property type="match status" value="1"/>
</dbReference>
<dbReference type="SUPFAM" id="SSF53335">
    <property type="entry name" value="S-adenosyl-L-methionine-dependent methyltransferases"/>
    <property type="match status" value="2"/>
</dbReference>
<dbReference type="PROSITE" id="PS51165">
    <property type="entry name" value="THUMP"/>
    <property type="match status" value="1"/>
</dbReference>
<dbReference type="PROSITE" id="PS01261">
    <property type="entry name" value="UPF0020"/>
    <property type="match status" value="1"/>
</dbReference>